<keyword id="KW-0044">Antibiotic</keyword>
<keyword id="KW-0929">Antimicrobial</keyword>
<keyword id="KW-0078">Bacteriocin</keyword>
<keyword id="KW-0903">Direct protein sequencing</keyword>
<keyword id="KW-0425">Lantibiotic</keyword>
<keyword id="KW-0964">Secreted</keyword>
<keyword id="KW-0883">Thioether bond</keyword>
<gene>
    <name type="primary">nsuA</name>
</gene>
<dbReference type="EMBL" id="DQ146939">
    <property type="protein sequence ID" value="ABA00878.1"/>
    <property type="molecule type" value="Genomic_DNA"/>
</dbReference>
<dbReference type="RefSeq" id="WP_330556472.1">
    <property type="nucleotide sequence ID" value="NZ_JAZDUP010000002.1"/>
</dbReference>
<dbReference type="SMR" id="Q2QBT0"/>
<dbReference type="GO" id="GO:0005576">
    <property type="term" value="C:extracellular region"/>
    <property type="evidence" value="ECO:0007669"/>
    <property type="project" value="UniProtKB-SubCell"/>
</dbReference>
<dbReference type="GO" id="GO:0005102">
    <property type="term" value="F:signaling receptor binding"/>
    <property type="evidence" value="ECO:0007669"/>
    <property type="project" value="UniProtKB-KW"/>
</dbReference>
<dbReference type="GO" id="GO:0042742">
    <property type="term" value="P:defense response to bacterium"/>
    <property type="evidence" value="ECO:0007669"/>
    <property type="project" value="UniProtKB-KW"/>
</dbReference>
<dbReference type="GO" id="GO:0031640">
    <property type="term" value="P:killing of cells of another organism"/>
    <property type="evidence" value="ECO:0007669"/>
    <property type="project" value="UniProtKB-KW"/>
</dbReference>
<dbReference type="InterPro" id="IPR006079">
    <property type="entry name" value="Lantibiotic_typ-A_Bacillales"/>
</dbReference>
<dbReference type="NCBIfam" id="TIGR03731">
    <property type="entry name" value="lantibio_gallid"/>
    <property type="match status" value="1"/>
</dbReference>
<dbReference type="Pfam" id="PF02052">
    <property type="entry name" value="Gallidermin"/>
    <property type="match status" value="1"/>
</dbReference>
<dbReference type="PRINTS" id="PR00324">
    <property type="entry name" value="NISIN"/>
</dbReference>
<organism>
    <name type="scientific">Streptococcus uberis</name>
    <dbReference type="NCBI Taxonomy" id="1349"/>
    <lineage>
        <taxon>Bacteria</taxon>
        <taxon>Bacillati</taxon>
        <taxon>Bacillota</taxon>
        <taxon>Bacilli</taxon>
        <taxon>Lactobacillales</taxon>
        <taxon>Streptococcaceae</taxon>
        <taxon>Streptococcus</taxon>
    </lineage>
</organism>
<proteinExistence type="evidence at protein level"/>
<protein>
    <recommendedName>
        <fullName>Lantibiotic nisin-U</fullName>
    </recommendedName>
</protein>
<evidence type="ECO:0000250" key="1"/>
<evidence type="ECO:0000269" key="2">
    <source>
    </source>
</evidence>
<evidence type="ECO:0000305" key="3"/>
<name>LANNU_STRUB</name>
<reference key="1">
    <citation type="journal article" date="2006" name="Appl. Environ. Microbiol.">
        <title>Molecular and genetic characterization of a novel nisin variant produced by Streptococcus uberis.</title>
        <authorList>
            <person name="Wirawan R.E."/>
            <person name="Klesse N.A."/>
            <person name="Jack R.W."/>
            <person name="Tagg J.R."/>
        </authorList>
    </citation>
    <scope>NUCLEOTIDE SEQUENCE [GENOMIC DNA]</scope>
    <scope>PROTEIN SEQUENCE OF 25-44</scope>
    <scope>DEHYDRATION AT THR-26; SER-29 AND THR-42</scope>
    <scope>LANTHIONINE CROSS-LINKS</scope>
    <scope>FUNCTION</scope>
    <scope>MASS SPECTROMETRY</scope>
    <source>
        <strain>42</strain>
    </source>
</reference>
<comment type="function">
    <text evidence="2">Lanthionine-containing peptide antibiotic (lantibiotic) active on Gram-positive bacteria. The bactericidal activity of lantibiotics is based on depolarization of energized bacterial cytoplasmic membranes, initiated by the formation of aqueous transmembrane pores.</text>
</comment>
<comment type="subcellular location">
    <subcellularLocation>
        <location>Secreted</location>
    </subcellularLocation>
</comment>
<comment type="PTM">
    <text evidence="1">Maturation of lantibiotics involves the enzymatic conversion of Thr, and Ser into dehydrated AA and the formation of thioether bonds with cysteine. This is followed by membrane translocation and cleavage of the modified precursor (By similarity).</text>
</comment>
<comment type="mass spectrometry"/>
<comment type="similarity">
    <text evidence="3">Belongs to the type A lantibiotic family.</text>
</comment>
<accession>Q2QBT0</accession>
<sequence>MNNEDFNLDLIKISKENNSGASPRITSKSLCTPGCKTGILMTCPLKTATCGCHFG</sequence>
<feature type="propeptide" id="PRO_0000326410" evidence="2">
    <location>
        <begin position="1"/>
        <end position="24"/>
    </location>
</feature>
<feature type="peptide" id="PRO_0000326411" description="Lantibiotic nisin-U">
    <location>
        <begin position="25"/>
        <end position="55"/>
    </location>
</feature>
<feature type="modified residue" description="2,3-didehydrobutyrine" evidence="2">
    <location>
        <position position="26"/>
    </location>
</feature>
<feature type="modified residue" description="2,3-didehydroalanine (Ser)" evidence="2">
    <location>
        <position position="29"/>
    </location>
</feature>
<feature type="modified residue" description="2,3-didehydrobutyrine" evidence="2">
    <location>
        <position position="42"/>
    </location>
</feature>
<feature type="cross-link" description="Lanthionine (Ser-Cys)" evidence="2">
    <location>
        <begin position="27"/>
        <end position="31"/>
    </location>
</feature>
<feature type="cross-link" description="Beta-methyllanthionine (Thr-Cys)" evidence="2">
    <location>
        <begin position="32"/>
        <end position="35"/>
    </location>
</feature>
<feature type="cross-link" description="Beta-methyllanthionine (Thr-Cys)" evidence="2">
    <location>
        <begin position="37"/>
        <end position="43"/>
    </location>
</feature>
<feature type="cross-link" description="Beta-methyllanthionine (Thr-Cys)" evidence="2">
    <location>
        <begin position="47"/>
        <end position="50"/>
    </location>
</feature>
<feature type="cross-link" description="Beta-methyllanthionine (Thr-Cys)" evidence="2">
    <location>
        <begin position="49"/>
        <end position="52"/>
    </location>
</feature>